<name>ASPG2_DROAN</name>
<sequence length="378" mass="41532">MCSPLPLLILRLLLLTHPSLGRHLRHRESRKIHSVVVSTWNYTDANLQAWSVLKQGPRRTRQAVIQGCLACQNLRCGRLLGGSYGPDERGNLSLEAAIMDGRNQKFGAVAGMEGIRNAILVAEAVLQHTHHSLLVGKGATDFARVMGYKEEHAVNLNTKNVIGNWTFARCQPNFWRDVVPPPRTQCGPYSPLPQYLLQRPMRQEYPITQGEHDQLAFLALDSEGLIHVASYSSGARFRLRGRVGDSAVPGAGIYADNEVGGAIASGDGDVLMHHLPAFLAVEAMRAGQSPAKAAAKVIQRVLKHNTEFNGAVIAVNRWGTYAAACAGMDEFHFVVSGGKGFLRMARVERVKCQDRKDVVDGGPKGFFTRKPMKNRKIE</sequence>
<accession>B3MJ16</accession>
<dbReference type="EMBL" id="CH902619">
    <property type="protein sequence ID" value="EDV37082.1"/>
    <property type="molecule type" value="Genomic_DNA"/>
</dbReference>
<dbReference type="SMR" id="B3MJ16"/>
<dbReference type="FunCoup" id="B3MJ16">
    <property type="interactions" value="121"/>
</dbReference>
<dbReference type="STRING" id="7217.B3MJ16"/>
<dbReference type="MEROPS" id="T02.A04"/>
<dbReference type="EnsemblMetazoa" id="FBtr0116309">
    <property type="protein sequence ID" value="FBpp0114801"/>
    <property type="gene ID" value="FBgn0088649"/>
</dbReference>
<dbReference type="EnsemblMetazoa" id="XM_001960224.2">
    <property type="protein sequence ID" value="XP_001960260.1"/>
    <property type="gene ID" value="LOC6494473"/>
</dbReference>
<dbReference type="GeneID" id="6494473"/>
<dbReference type="KEGG" id="dan:6494473"/>
<dbReference type="eggNOG" id="KOG1593">
    <property type="taxonomic scope" value="Eukaryota"/>
</dbReference>
<dbReference type="HOGENOM" id="CLU_021603_0_0_1"/>
<dbReference type="InParanoid" id="B3MJ16"/>
<dbReference type="OMA" id="QAVIQGC"/>
<dbReference type="OrthoDB" id="188713at2759"/>
<dbReference type="PhylomeDB" id="B3MJ16"/>
<dbReference type="Proteomes" id="UP000007801">
    <property type="component" value="Unassembled WGS sequence"/>
</dbReference>
<dbReference type="GO" id="GO:0005764">
    <property type="term" value="C:lysosome"/>
    <property type="evidence" value="ECO:0007669"/>
    <property type="project" value="TreeGrafter"/>
</dbReference>
<dbReference type="GO" id="GO:0003948">
    <property type="term" value="F:N4-(beta-N-acetylglucosaminyl)-L-asparaginase activity"/>
    <property type="evidence" value="ECO:0007669"/>
    <property type="project" value="TreeGrafter"/>
</dbReference>
<dbReference type="CDD" id="cd04513">
    <property type="entry name" value="Glycosylasparaginase"/>
    <property type="match status" value="1"/>
</dbReference>
<dbReference type="Gene3D" id="3.60.20.30">
    <property type="entry name" value="(Glycosyl)asparaginase"/>
    <property type="match status" value="1"/>
</dbReference>
<dbReference type="InterPro" id="IPR029055">
    <property type="entry name" value="Ntn_hydrolases_N"/>
</dbReference>
<dbReference type="InterPro" id="IPR000246">
    <property type="entry name" value="Peptidase_T2"/>
</dbReference>
<dbReference type="PANTHER" id="PTHR10188">
    <property type="entry name" value="L-ASPARAGINASE"/>
    <property type="match status" value="1"/>
</dbReference>
<dbReference type="PANTHER" id="PTHR10188:SF6">
    <property type="entry name" value="N(4)-(BETA-N-ACETYLGLUCOSAMINYL)-L-ASPARAGINASE"/>
    <property type="match status" value="1"/>
</dbReference>
<dbReference type="Pfam" id="PF01112">
    <property type="entry name" value="Asparaginase_2"/>
    <property type="match status" value="1"/>
</dbReference>
<dbReference type="SUPFAM" id="SSF56235">
    <property type="entry name" value="N-terminal nucleophile aminohydrolases (Ntn hydrolases)"/>
    <property type="match status" value="1"/>
</dbReference>
<gene>
    <name type="ORF">GF11609</name>
</gene>
<comment type="similarity">
    <text evidence="3">Belongs to the Ntn-hydrolase family.</text>
</comment>
<evidence type="ECO:0000250" key="1"/>
<evidence type="ECO:0000250" key="2">
    <source>
        <dbReference type="UniProtKB" id="P20933"/>
    </source>
</evidence>
<evidence type="ECO:0000255" key="3"/>
<evidence type="ECO:0000312" key="4">
    <source>
        <dbReference type="EMBL" id="EDV37082.1"/>
    </source>
</evidence>
<proteinExistence type="inferred from homology"/>
<keyword id="KW-1015">Disulfide bond</keyword>
<keyword id="KW-1185">Reference proteome</keyword>
<keyword id="KW-0732">Signal</keyword>
<protein>
    <recommendedName>
        <fullName>L-asparaginase-like protein GF11609</fullName>
    </recommendedName>
</protein>
<organism>
    <name type="scientific">Drosophila ananassae</name>
    <name type="common">Fruit fly</name>
    <dbReference type="NCBI Taxonomy" id="7217"/>
    <lineage>
        <taxon>Eukaryota</taxon>
        <taxon>Metazoa</taxon>
        <taxon>Ecdysozoa</taxon>
        <taxon>Arthropoda</taxon>
        <taxon>Hexapoda</taxon>
        <taxon>Insecta</taxon>
        <taxon>Pterygota</taxon>
        <taxon>Neoptera</taxon>
        <taxon>Endopterygota</taxon>
        <taxon>Diptera</taxon>
        <taxon>Brachycera</taxon>
        <taxon>Muscomorpha</taxon>
        <taxon>Ephydroidea</taxon>
        <taxon>Drosophilidae</taxon>
        <taxon>Drosophila</taxon>
        <taxon>Sophophora</taxon>
    </lineage>
</organism>
<feature type="signal peptide" evidence="3">
    <location>
        <begin position="1"/>
        <end position="21"/>
    </location>
</feature>
<feature type="chain" id="PRO_0000384141" description="L-asparaginase-like protein GF11609">
    <location>
        <begin position="22"/>
        <end position="378"/>
    </location>
</feature>
<feature type="disulfide bond" evidence="2">
    <location>
        <begin position="71"/>
        <end position="76"/>
    </location>
</feature>
<feature type="disulfide bond" evidence="2">
    <location>
        <begin position="170"/>
        <end position="186"/>
    </location>
</feature>
<feature type="disulfide bond" evidence="1">
    <location>
        <begin position="325"/>
        <end position="352"/>
    </location>
</feature>
<reference evidence="4" key="1">
    <citation type="journal article" date="2007" name="Nature">
        <title>Evolution of genes and genomes on the Drosophila phylogeny.</title>
        <authorList>
            <consortium name="Drosophila 12 genomes consortium"/>
        </authorList>
    </citation>
    <scope>NUCLEOTIDE SEQUENCE [LARGE SCALE GENOMIC DNA]</scope>
    <source>
        <strain evidence="4">Tucson 14024-0371.13</strain>
    </source>
</reference>